<comment type="function">
    <text evidence="1">Has an important function as a repair enzyme for proteins that have been inactivated by oxidation. Catalyzes the reversible oxidation-reduction of methionine sulfoxide in proteins to methionine (By similarity).</text>
</comment>
<comment type="catalytic activity">
    <reaction>
        <text>L-methionyl-[protein] + [thioredoxin]-disulfide + H2O = L-methionyl-(S)-S-oxide-[protein] + [thioredoxin]-dithiol</text>
        <dbReference type="Rhea" id="RHEA:14217"/>
        <dbReference type="Rhea" id="RHEA-COMP:10698"/>
        <dbReference type="Rhea" id="RHEA-COMP:10700"/>
        <dbReference type="Rhea" id="RHEA-COMP:12313"/>
        <dbReference type="Rhea" id="RHEA-COMP:12315"/>
        <dbReference type="ChEBI" id="CHEBI:15377"/>
        <dbReference type="ChEBI" id="CHEBI:16044"/>
        <dbReference type="ChEBI" id="CHEBI:29950"/>
        <dbReference type="ChEBI" id="CHEBI:44120"/>
        <dbReference type="ChEBI" id="CHEBI:50058"/>
        <dbReference type="EC" id="1.8.4.11"/>
    </reaction>
</comment>
<comment type="catalytic activity">
    <reaction>
        <text>[thioredoxin]-disulfide + L-methionine + H2O = L-methionine (S)-S-oxide + [thioredoxin]-dithiol</text>
        <dbReference type="Rhea" id="RHEA:19993"/>
        <dbReference type="Rhea" id="RHEA-COMP:10698"/>
        <dbReference type="Rhea" id="RHEA-COMP:10700"/>
        <dbReference type="ChEBI" id="CHEBI:15377"/>
        <dbReference type="ChEBI" id="CHEBI:29950"/>
        <dbReference type="ChEBI" id="CHEBI:50058"/>
        <dbReference type="ChEBI" id="CHEBI:57844"/>
        <dbReference type="ChEBI" id="CHEBI:58772"/>
        <dbReference type="EC" id="1.8.4.11"/>
    </reaction>
</comment>
<comment type="similarity">
    <text evidence="2">Belongs to the MsrA Met sulfoxide reductase family.</text>
</comment>
<accession>Q9CFC8</accession>
<sequence length="183" mass="21331">MSTERAIFAGGCFWCMVEPFEERPGILAVTSGYTGGHIEYPTYDQVLSKASGHTEAVEILFDNELISYDELLDIYWSLIDPTDADGQIYDRGANYRPVIFVESEEQRIAAQKSKIALEKSGIWDKPIVVPIEEAKTFWPAEEYHQQYYKKDPKRYQAMHKARERYLALQRFKGKFKFLRKNTR</sequence>
<protein>
    <recommendedName>
        <fullName>Peptide methionine sulfoxide reductase MsrA 1</fullName>
        <shortName>Protein-methionine-S-oxide reductase 1</shortName>
        <ecNumber>1.8.4.11</ecNumber>
    </recommendedName>
    <alternativeName>
        <fullName>Peptide-methionine (S)-S-oxide reductase 1</fullName>
        <shortName>Peptide Met(O) reductase 1</shortName>
    </alternativeName>
</protein>
<feature type="chain" id="PRO_0000138551" description="Peptide methionine sulfoxide reductase MsrA 1">
    <location>
        <begin position="1"/>
        <end position="183"/>
    </location>
</feature>
<feature type="active site" evidence="1">
    <location>
        <position position="12"/>
    </location>
</feature>
<evidence type="ECO:0000250" key="1"/>
<evidence type="ECO:0000305" key="2"/>
<gene>
    <name type="primary">msrA1</name>
    <name type="synonym">pmsX</name>
    <name type="ordered locus">LL1553</name>
    <name type="ORF">L193644</name>
</gene>
<dbReference type="EC" id="1.8.4.11"/>
<dbReference type="EMBL" id="AE005176">
    <property type="protein sequence ID" value="AAK05651.1"/>
    <property type="molecule type" value="Genomic_DNA"/>
</dbReference>
<dbReference type="PIR" id="A86819">
    <property type="entry name" value="A86819"/>
</dbReference>
<dbReference type="RefSeq" id="NP_267709.1">
    <property type="nucleotide sequence ID" value="NC_002662.1"/>
</dbReference>
<dbReference type="SMR" id="Q9CFC8"/>
<dbReference type="PaxDb" id="272623-L193644"/>
<dbReference type="EnsemblBacteria" id="AAK05651">
    <property type="protein sequence ID" value="AAK05651"/>
    <property type="gene ID" value="L193644"/>
</dbReference>
<dbReference type="KEGG" id="lla:L193644"/>
<dbReference type="PATRIC" id="fig|272623.7.peg.1667"/>
<dbReference type="eggNOG" id="COG0225">
    <property type="taxonomic scope" value="Bacteria"/>
</dbReference>
<dbReference type="HOGENOM" id="CLU_031040_10_0_9"/>
<dbReference type="OrthoDB" id="4174719at2"/>
<dbReference type="Proteomes" id="UP000002196">
    <property type="component" value="Chromosome"/>
</dbReference>
<dbReference type="GO" id="GO:0033744">
    <property type="term" value="F:L-methionine:thioredoxin-disulfide S-oxidoreductase activity"/>
    <property type="evidence" value="ECO:0007669"/>
    <property type="project" value="RHEA"/>
</dbReference>
<dbReference type="GO" id="GO:0008113">
    <property type="term" value="F:peptide-methionine (S)-S-oxide reductase activity"/>
    <property type="evidence" value="ECO:0007669"/>
    <property type="project" value="UniProtKB-UniRule"/>
</dbReference>
<dbReference type="GO" id="GO:0036211">
    <property type="term" value="P:protein modification process"/>
    <property type="evidence" value="ECO:0007669"/>
    <property type="project" value="UniProtKB-UniRule"/>
</dbReference>
<dbReference type="Gene3D" id="3.30.1060.10">
    <property type="entry name" value="Peptide methionine sulphoxide reductase MsrA"/>
    <property type="match status" value="1"/>
</dbReference>
<dbReference type="HAMAP" id="MF_01401">
    <property type="entry name" value="MsrA"/>
    <property type="match status" value="1"/>
</dbReference>
<dbReference type="InterPro" id="IPR002569">
    <property type="entry name" value="Met_Sox_Rdtase_MsrA_dom"/>
</dbReference>
<dbReference type="InterPro" id="IPR036509">
    <property type="entry name" value="Met_Sox_Rdtase_MsrA_sf"/>
</dbReference>
<dbReference type="NCBIfam" id="TIGR00401">
    <property type="entry name" value="msrA"/>
    <property type="match status" value="1"/>
</dbReference>
<dbReference type="PANTHER" id="PTHR43774">
    <property type="entry name" value="PEPTIDE METHIONINE SULFOXIDE REDUCTASE"/>
    <property type="match status" value="1"/>
</dbReference>
<dbReference type="PANTHER" id="PTHR43774:SF1">
    <property type="entry name" value="PEPTIDE METHIONINE SULFOXIDE REDUCTASE MSRA 2"/>
    <property type="match status" value="1"/>
</dbReference>
<dbReference type="Pfam" id="PF01625">
    <property type="entry name" value="PMSR"/>
    <property type="match status" value="1"/>
</dbReference>
<dbReference type="SUPFAM" id="SSF55068">
    <property type="entry name" value="Peptide methionine sulfoxide reductase"/>
    <property type="match status" value="1"/>
</dbReference>
<proteinExistence type="inferred from homology"/>
<name>MSRA1_LACLA</name>
<reference key="1">
    <citation type="journal article" date="2001" name="Genome Res.">
        <title>The complete genome sequence of the lactic acid bacterium Lactococcus lactis ssp. lactis IL1403.</title>
        <authorList>
            <person name="Bolotin A."/>
            <person name="Wincker P."/>
            <person name="Mauger S."/>
            <person name="Jaillon O."/>
            <person name="Malarme K."/>
            <person name="Weissenbach J."/>
            <person name="Ehrlich S.D."/>
            <person name="Sorokin A."/>
        </authorList>
    </citation>
    <scope>NUCLEOTIDE SEQUENCE [LARGE SCALE GENOMIC DNA]</scope>
    <source>
        <strain>IL1403</strain>
    </source>
</reference>
<organism>
    <name type="scientific">Lactococcus lactis subsp. lactis (strain IL1403)</name>
    <name type="common">Streptococcus lactis</name>
    <dbReference type="NCBI Taxonomy" id="272623"/>
    <lineage>
        <taxon>Bacteria</taxon>
        <taxon>Bacillati</taxon>
        <taxon>Bacillota</taxon>
        <taxon>Bacilli</taxon>
        <taxon>Lactobacillales</taxon>
        <taxon>Streptococcaceae</taxon>
        <taxon>Lactococcus</taxon>
    </lineage>
</organism>
<keyword id="KW-0560">Oxidoreductase</keyword>
<keyword id="KW-1185">Reference proteome</keyword>